<protein>
    <recommendedName>
        <fullName evidence="1">Pyridoxal 5'-phosphate synthase subunit PdxT</fullName>
        <ecNumber evidence="1">4.3.3.6</ecNumber>
    </recommendedName>
    <alternativeName>
        <fullName evidence="1">Pdx2</fullName>
    </alternativeName>
    <alternativeName>
        <fullName evidence="1">Pyridoxal 5'-phosphate synthase glutaminase subunit</fullName>
        <ecNumber evidence="1">3.5.1.2</ecNumber>
    </alternativeName>
</protein>
<gene>
    <name evidence="1" type="primary">pdxT</name>
    <name type="ordered locus">DR_1366</name>
</gene>
<evidence type="ECO:0000255" key="1">
    <source>
        <dbReference type="HAMAP-Rule" id="MF_01615"/>
    </source>
</evidence>
<organism>
    <name type="scientific">Deinococcus radiodurans (strain ATCC 13939 / DSM 20539 / JCM 16871 / CCUG 27074 / LMG 4051 / NBRC 15346 / NCIMB 9279 / VKM B-1422 / R1)</name>
    <dbReference type="NCBI Taxonomy" id="243230"/>
    <lineage>
        <taxon>Bacteria</taxon>
        <taxon>Thermotogati</taxon>
        <taxon>Deinococcota</taxon>
        <taxon>Deinococci</taxon>
        <taxon>Deinococcales</taxon>
        <taxon>Deinococcaceae</taxon>
        <taxon>Deinococcus</taxon>
    </lineage>
</organism>
<keyword id="KW-0315">Glutamine amidotransferase</keyword>
<keyword id="KW-0378">Hydrolase</keyword>
<keyword id="KW-0456">Lyase</keyword>
<keyword id="KW-0663">Pyridoxal phosphate</keyword>
<keyword id="KW-1185">Reference proteome</keyword>
<name>PDXT_DEIRA</name>
<reference key="1">
    <citation type="journal article" date="1999" name="Science">
        <title>Genome sequence of the radioresistant bacterium Deinococcus radiodurans R1.</title>
        <authorList>
            <person name="White O."/>
            <person name="Eisen J.A."/>
            <person name="Heidelberg J.F."/>
            <person name="Hickey E.K."/>
            <person name="Peterson J.D."/>
            <person name="Dodson R.J."/>
            <person name="Haft D.H."/>
            <person name="Gwinn M.L."/>
            <person name="Nelson W.C."/>
            <person name="Richardson D.L."/>
            <person name="Moffat K.S."/>
            <person name="Qin H."/>
            <person name="Jiang L."/>
            <person name="Pamphile W."/>
            <person name="Crosby M."/>
            <person name="Shen M."/>
            <person name="Vamathevan J.J."/>
            <person name="Lam P."/>
            <person name="McDonald L.A."/>
            <person name="Utterback T.R."/>
            <person name="Zalewski C."/>
            <person name="Makarova K.S."/>
            <person name="Aravind L."/>
            <person name="Daly M.J."/>
            <person name="Minton K.W."/>
            <person name="Fleischmann R.D."/>
            <person name="Ketchum K.A."/>
            <person name="Nelson K.E."/>
            <person name="Salzberg S.L."/>
            <person name="Smith H.O."/>
            <person name="Venter J.C."/>
            <person name="Fraser C.M."/>
        </authorList>
    </citation>
    <scope>NUCLEOTIDE SEQUENCE [LARGE SCALE GENOMIC DNA]</scope>
    <source>
        <strain>ATCC 13939 / DSM 20539 / JCM 16871 / CCUG 27074 / LMG 4051 / NBRC 15346 / NCIMB 9279 / VKM B-1422 / R1</strain>
    </source>
</reference>
<proteinExistence type="inferred from homology"/>
<comment type="function">
    <text evidence="1">Catalyzes the hydrolysis of glutamine to glutamate and ammonia as part of the biosynthesis of pyridoxal 5'-phosphate. The resulting ammonia molecule is channeled to the active site of PdxS.</text>
</comment>
<comment type="catalytic activity">
    <reaction evidence="1">
        <text>aldehydo-D-ribose 5-phosphate + D-glyceraldehyde 3-phosphate + L-glutamine = pyridoxal 5'-phosphate + L-glutamate + phosphate + 3 H2O + H(+)</text>
        <dbReference type="Rhea" id="RHEA:31507"/>
        <dbReference type="ChEBI" id="CHEBI:15377"/>
        <dbReference type="ChEBI" id="CHEBI:15378"/>
        <dbReference type="ChEBI" id="CHEBI:29985"/>
        <dbReference type="ChEBI" id="CHEBI:43474"/>
        <dbReference type="ChEBI" id="CHEBI:58273"/>
        <dbReference type="ChEBI" id="CHEBI:58359"/>
        <dbReference type="ChEBI" id="CHEBI:59776"/>
        <dbReference type="ChEBI" id="CHEBI:597326"/>
        <dbReference type="EC" id="4.3.3.6"/>
    </reaction>
</comment>
<comment type="catalytic activity">
    <reaction evidence="1">
        <text>L-glutamine + H2O = L-glutamate + NH4(+)</text>
        <dbReference type="Rhea" id="RHEA:15889"/>
        <dbReference type="ChEBI" id="CHEBI:15377"/>
        <dbReference type="ChEBI" id="CHEBI:28938"/>
        <dbReference type="ChEBI" id="CHEBI:29985"/>
        <dbReference type="ChEBI" id="CHEBI:58359"/>
        <dbReference type="EC" id="3.5.1.2"/>
    </reaction>
</comment>
<comment type="pathway">
    <text evidence="1">Cofactor biosynthesis; pyridoxal 5'-phosphate biosynthesis.</text>
</comment>
<comment type="subunit">
    <text evidence="1">In the presence of PdxS, forms a dodecamer of heterodimers. Only shows activity in the heterodimer.</text>
</comment>
<comment type="similarity">
    <text evidence="1">Belongs to the glutaminase PdxT/SNO family.</text>
</comment>
<dbReference type="EC" id="4.3.3.6" evidence="1"/>
<dbReference type="EC" id="3.5.1.2" evidence="1"/>
<dbReference type="EMBL" id="AE000513">
    <property type="protein sequence ID" value="AAF10937.1"/>
    <property type="molecule type" value="Genomic_DNA"/>
</dbReference>
<dbReference type="PIR" id="G75405">
    <property type="entry name" value="G75405"/>
</dbReference>
<dbReference type="RefSeq" id="NP_295089.1">
    <property type="nucleotide sequence ID" value="NC_001263.1"/>
</dbReference>
<dbReference type="RefSeq" id="WP_010888007.1">
    <property type="nucleotide sequence ID" value="NC_001263.1"/>
</dbReference>
<dbReference type="SMR" id="Q9RUL8"/>
<dbReference type="FunCoup" id="Q9RUL8">
    <property type="interactions" value="213"/>
</dbReference>
<dbReference type="STRING" id="243230.DR_1366"/>
<dbReference type="PaxDb" id="243230-DR_1366"/>
<dbReference type="EnsemblBacteria" id="AAF10937">
    <property type="protein sequence ID" value="AAF10937"/>
    <property type="gene ID" value="DR_1366"/>
</dbReference>
<dbReference type="GeneID" id="69517611"/>
<dbReference type="KEGG" id="dra:DR_1366"/>
<dbReference type="PATRIC" id="fig|243230.17.peg.1563"/>
<dbReference type="eggNOG" id="COG0311">
    <property type="taxonomic scope" value="Bacteria"/>
</dbReference>
<dbReference type="HOGENOM" id="CLU_069674_2_0_0"/>
<dbReference type="InParanoid" id="Q9RUL8"/>
<dbReference type="OrthoDB" id="9810320at2"/>
<dbReference type="UniPathway" id="UPA00245"/>
<dbReference type="Proteomes" id="UP000002524">
    <property type="component" value="Chromosome 1"/>
</dbReference>
<dbReference type="GO" id="GO:0005829">
    <property type="term" value="C:cytosol"/>
    <property type="evidence" value="ECO:0000318"/>
    <property type="project" value="GO_Central"/>
</dbReference>
<dbReference type="GO" id="GO:1903600">
    <property type="term" value="C:glutaminase complex"/>
    <property type="evidence" value="ECO:0000318"/>
    <property type="project" value="GO_Central"/>
</dbReference>
<dbReference type="GO" id="GO:0004359">
    <property type="term" value="F:glutaminase activity"/>
    <property type="evidence" value="ECO:0007669"/>
    <property type="project" value="UniProtKB-UniRule"/>
</dbReference>
<dbReference type="GO" id="GO:0036381">
    <property type="term" value="F:pyridoxal 5'-phosphate synthase (glutamine hydrolysing) activity"/>
    <property type="evidence" value="ECO:0007669"/>
    <property type="project" value="UniProtKB-UniRule"/>
</dbReference>
<dbReference type="GO" id="GO:0006543">
    <property type="term" value="P:glutamine catabolic process"/>
    <property type="evidence" value="ECO:0007669"/>
    <property type="project" value="UniProtKB-UniRule"/>
</dbReference>
<dbReference type="GO" id="GO:0042823">
    <property type="term" value="P:pyridoxal phosphate biosynthetic process"/>
    <property type="evidence" value="ECO:0000318"/>
    <property type="project" value="GO_Central"/>
</dbReference>
<dbReference type="GO" id="GO:0008614">
    <property type="term" value="P:pyridoxine metabolic process"/>
    <property type="evidence" value="ECO:0000318"/>
    <property type="project" value="GO_Central"/>
</dbReference>
<dbReference type="CDD" id="cd01749">
    <property type="entry name" value="GATase1_PB"/>
    <property type="match status" value="1"/>
</dbReference>
<dbReference type="FunFam" id="3.40.50.880:FF:000041">
    <property type="entry name" value="Glutamine amidotransferase subunit pdxT, putative"/>
    <property type="match status" value="1"/>
</dbReference>
<dbReference type="Gene3D" id="3.40.50.880">
    <property type="match status" value="1"/>
</dbReference>
<dbReference type="HAMAP" id="MF_01615">
    <property type="entry name" value="PdxT"/>
    <property type="match status" value="1"/>
</dbReference>
<dbReference type="InterPro" id="IPR029062">
    <property type="entry name" value="Class_I_gatase-like"/>
</dbReference>
<dbReference type="InterPro" id="IPR002161">
    <property type="entry name" value="PdxT/SNO"/>
</dbReference>
<dbReference type="InterPro" id="IPR021196">
    <property type="entry name" value="PdxT/SNO_CS"/>
</dbReference>
<dbReference type="NCBIfam" id="TIGR03800">
    <property type="entry name" value="PLP_synth_Pdx2"/>
    <property type="match status" value="1"/>
</dbReference>
<dbReference type="PANTHER" id="PTHR31559">
    <property type="entry name" value="PYRIDOXAL 5'-PHOSPHATE SYNTHASE SUBUNIT SNO"/>
    <property type="match status" value="1"/>
</dbReference>
<dbReference type="PANTHER" id="PTHR31559:SF0">
    <property type="entry name" value="PYRIDOXAL 5'-PHOSPHATE SYNTHASE SUBUNIT SNO1-RELATED"/>
    <property type="match status" value="1"/>
</dbReference>
<dbReference type="Pfam" id="PF01174">
    <property type="entry name" value="SNO"/>
    <property type="match status" value="1"/>
</dbReference>
<dbReference type="PIRSF" id="PIRSF005639">
    <property type="entry name" value="Glut_amidoT_SNO"/>
    <property type="match status" value="1"/>
</dbReference>
<dbReference type="SUPFAM" id="SSF52317">
    <property type="entry name" value="Class I glutamine amidotransferase-like"/>
    <property type="match status" value="1"/>
</dbReference>
<dbReference type="PROSITE" id="PS01236">
    <property type="entry name" value="PDXT_SNO_1"/>
    <property type="match status" value="1"/>
</dbReference>
<dbReference type="PROSITE" id="PS51130">
    <property type="entry name" value="PDXT_SNO_2"/>
    <property type="match status" value="1"/>
</dbReference>
<feature type="chain" id="PRO_0000135637" description="Pyridoxal 5'-phosphate synthase subunit PdxT">
    <location>
        <begin position="1"/>
        <end position="196"/>
    </location>
</feature>
<feature type="active site" description="Nucleophile" evidence="1">
    <location>
        <position position="78"/>
    </location>
</feature>
<feature type="active site" description="Charge relay system" evidence="1">
    <location>
        <position position="174"/>
    </location>
</feature>
<feature type="active site" description="Charge relay system" evidence="1">
    <location>
        <position position="176"/>
    </location>
</feature>
<feature type="binding site" evidence="1">
    <location>
        <begin position="46"/>
        <end position="48"/>
    </location>
    <ligand>
        <name>L-glutamine</name>
        <dbReference type="ChEBI" id="CHEBI:58359"/>
    </ligand>
</feature>
<feature type="binding site" evidence="1">
    <location>
        <position position="110"/>
    </location>
    <ligand>
        <name>L-glutamine</name>
        <dbReference type="ChEBI" id="CHEBI:58359"/>
    </ligand>
</feature>
<feature type="binding site" evidence="1">
    <location>
        <begin position="138"/>
        <end position="139"/>
    </location>
    <ligand>
        <name>L-glutamine</name>
        <dbReference type="ChEBI" id="CHEBI:58359"/>
    </ligand>
</feature>
<sequence>MTVGVLALQGAFREHRQRLEQLGAGVREVRLPADLAGLSGLILPGGESTTMVRLLTEGGLWHPLRDFHAAGGALWGTCAGAIVLAREVMGGSPSLPPQPGLGLLDITVQRNAFGRQVDSFTAPLDIAGLDAPFPAVFIRAPVITRVGPAARALATLGDRTAHVQQGRVLASAFHPELTEDTRLHRVFLGLAGERAY</sequence>
<accession>Q9RUL8</accession>